<dbReference type="EC" id="2.5.1.3" evidence="1"/>
<dbReference type="EMBL" id="AP010904">
    <property type="protein sequence ID" value="BAH76567.1"/>
    <property type="molecule type" value="Genomic_DNA"/>
</dbReference>
<dbReference type="RefSeq" id="WP_015861726.1">
    <property type="nucleotide sequence ID" value="NC_012796.1"/>
</dbReference>
<dbReference type="SMR" id="C4XIJ2"/>
<dbReference type="STRING" id="573370.DMR_30760"/>
<dbReference type="KEGG" id="dma:DMR_30760"/>
<dbReference type="eggNOG" id="COG0352">
    <property type="taxonomic scope" value="Bacteria"/>
</dbReference>
<dbReference type="HOGENOM" id="CLU_018272_3_2_7"/>
<dbReference type="OrthoDB" id="9810880at2"/>
<dbReference type="UniPathway" id="UPA00060">
    <property type="reaction ID" value="UER00141"/>
</dbReference>
<dbReference type="Proteomes" id="UP000009071">
    <property type="component" value="Chromosome"/>
</dbReference>
<dbReference type="GO" id="GO:0005737">
    <property type="term" value="C:cytoplasm"/>
    <property type="evidence" value="ECO:0007669"/>
    <property type="project" value="TreeGrafter"/>
</dbReference>
<dbReference type="GO" id="GO:0000287">
    <property type="term" value="F:magnesium ion binding"/>
    <property type="evidence" value="ECO:0007669"/>
    <property type="project" value="UniProtKB-UniRule"/>
</dbReference>
<dbReference type="GO" id="GO:0004789">
    <property type="term" value="F:thiamine-phosphate diphosphorylase activity"/>
    <property type="evidence" value="ECO:0007669"/>
    <property type="project" value="UniProtKB-UniRule"/>
</dbReference>
<dbReference type="GO" id="GO:0009228">
    <property type="term" value="P:thiamine biosynthetic process"/>
    <property type="evidence" value="ECO:0007669"/>
    <property type="project" value="UniProtKB-KW"/>
</dbReference>
<dbReference type="GO" id="GO:0009229">
    <property type="term" value="P:thiamine diphosphate biosynthetic process"/>
    <property type="evidence" value="ECO:0007669"/>
    <property type="project" value="UniProtKB-UniRule"/>
</dbReference>
<dbReference type="CDD" id="cd00564">
    <property type="entry name" value="TMP_TenI"/>
    <property type="match status" value="1"/>
</dbReference>
<dbReference type="FunFam" id="3.20.20.70:FF:000096">
    <property type="entry name" value="Thiamine-phosphate synthase"/>
    <property type="match status" value="1"/>
</dbReference>
<dbReference type="Gene3D" id="3.20.20.70">
    <property type="entry name" value="Aldolase class I"/>
    <property type="match status" value="1"/>
</dbReference>
<dbReference type="HAMAP" id="MF_00097">
    <property type="entry name" value="TMP_synthase"/>
    <property type="match status" value="1"/>
</dbReference>
<dbReference type="InterPro" id="IPR013785">
    <property type="entry name" value="Aldolase_TIM"/>
</dbReference>
<dbReference type="InterPro" id="IPR036206">
    <property type="entry name" value="ThiamineP_synth_sf"/>
</dbReference>
<dbReference type="InterPro" id="IPR022998">
    <property type="entry name" value="ThiamineP_synth_TenI"/>
</dbReference>
<dbReference type="InterPro" id="IPR034291">
    <property type="entry name" value="TMP_synthase"/>
</dbReference>
<dbReference type="NCBIfam" id="TIGR00693">
    <property type="entry name" value="thiE"/>
    <property type="match status" value="1"/>
</dbReference>
<dbReference type="PANTHER" id="PTHR20857">
    <property type="entry name" value="THIAMINE-PHOSPHATE PYROPHOSPHORYLASE"/>
    <property type="match status" value="1"/>
</dbReference>
<dbReference type="PANTHER" id="PTHR20857:SF15">
    <property type="entry name" value="THIAMINE-PHOSPHATE SYNTHASE"/>
    <property type="match status" value="1"/>
</dbReference>
<dbReference type="Pfam" id="PF02581">
    <property type="entry name" value="TMP-TENI"/>
    <property type="match status" value="1"/>
</dbReference>
<dbReference type="SUPFAM" id="SSF51391">
    <property type="entry name" value="Thiamin phosphate synthase"/>
    <property type="match status" value="1"/>
</dbReference>
<accession>C4XIJ2</accession>
<name>THIE_SOLM1</name>
<evidence type="ECO:0000255" key="1">
    <source>
        <dbReference type="HAMAP-Rule" id="MF_00097"/>
    </source>
</evidence>
<organism>
    <name type="scientific">Solidesulfovibrio magneticus (strain ATCC 700980 / DSM 13731 / RS-1)</name>
    <name type="common">Desulfovibrio magneticus</name>
    <dbReference type="NCBI Taxonomy" id="573370"/>
    <lineage>
        <taxon>Bacteria</taxon>
        <taxon>Pseudomonadati</taxon>
        <taxon>Thermodesulfobacteriota</taxon>
        <taxon>Desulfovibrionia</taxon>
        <taxon>Desulfovibrionales</taxon>
        <taxon>Desulfovibrionaceae</taxon>
        <taxon>Solidesulfovibrio</taxon>
    </lineage>
</organism>
<feature type="chain" id="PRO_1000202749" description="Thiamine-phosphate synthase">
    <location>
        <begin position="1"/>
        <end position="211"/>
    </location>
</feature>
<feature type="binding site" evidence="1">
    <location>
        <begin position="39"/>
        <end position="43"/>
    </location>
    <ligand>
        <name>4-amino-2-methyl-5-(diphosphooxymethyl)pyrimidine</name>
        <dbReference type="ChEBI" id="CHEBI:57841"/>
    </ligand>
</feature>
<feature type="binding site" evidence="1">
    <location>
        <position position="71"/>
    </location>
    <ligand>
        <name>4-amino-2-methyl-5-(diphosphooxymethyl)pyrimidine</name>
        <dbReference type="ChEBI" id="CHEBI:57841"/>
    </ligand>
</feature>
<feature type="binding site" evidence="1">
    <location>
        <position position="72"/>
    </location>
    <ligand>
        <name>Mg(2+)</name>
        <dbReference type="ChEBI" id="CHEBI:18420"/>
    </ligand>
</feature>
<feature type="binding site" evidence="1">
    <location>
        <position position="91"/>
    </location>
    <ligand>
        <name>Mg(2+)</name>
        <dbReference type="ChEBI" id="CHEBI:18420"/>
    </ligand>
</feature>
<feature type="binding site" evidence="1">
    <location>
        <position position="110"/>
    </location>
    <ligand>
        <name>4-amino-2-methyl-5-(diphosphooxymethyl)pyrimidine</name>
        <dbReference type="ChEBI" id="CHEBI:57841"/>
    </ligand>
</feature>
<feature type="binding site" evidence="1">
    <location>
        <begin position="136"/>
        <end position="138"/>
    </location>
    <ligand>
        <name>2-[(2R,5Z)-2-carboxy-4-methylthiazol-5(2H)-ylidene]ethyl phosphate</name>
        <dbReference type="ChEBI" id="CHEBI:62899"/>
    </ligand>
</feature>
<feature type="binding site" evidence="1">
    <location>
        <position position="139"/>
    </location>
    <ligand>
        <name>4-amino-2-methyl-5-(diphosphooxymethyl)pyrimidine</name>
        <dbReference type="ChEBI" id="CHEBI:57841"/>
    </ligand>
</feature>
<feature type="binding site" evidence="1">
    <location>
        <position position="167"/>
    </location>
    <ligand>
        <name>2-[(2R,5Z)-2-carboxy-4-methylthiazol-5(2H)-ylidene]ethyl phosphate</name>
        <dbReference type="ChEBI" id="CHEBI:62899"/>
    </ligand>
</feature>
<feature type="binding site" evidence="1">
    <location>
        <begin position="187"/>
        <end position="188"/>
    </location>
    <ligand>
        <name>2-[(2R,5Z)-2-carboxy-4-methylthiazol-5(2H)-ylidene]ethyl phosphate</name>
        <dbReference type="ChEBI" id="CHEBI:62899"/>
    </ligand>
</feature>
<keyword id="KW-0460">Magnesium</keyword>
<keyword id="KW-0479">Metal-binding</keyword>
<keyword id="KW-0784">Thiamine biosynthesis</keyword>
<keyword id="KW-0808">Transferase</keyword>
<proteinExistence type="inferred from homology"/>
<gene>
    <name evidence="1" type="primary">thiE</name>
    <name type="ordered locus">DMR_30760</name>
</gene>
<reference key="1">
    <citation type="journal article" date="2009" name="Genome Res.">
        <title>Whole genome sequence of Desulfovibrio magneticus strain RS-1 revealed common gene clusters in magnetotactic bacteria.</title>
        <authorList>
            <person name="Nakazawa H."/>
            <person name="Arakaki A."/>
            <person name="Narita-Yamada S."/>
            <person name="Yashiro I."/>
            <person name="Jinno K."/>
            <person name="Aoki N."/>
            <person name="Tsuruyama A."/>
            <person name="Okamura Y."/>
            <person name="Tanikawa S."/>
            <person name="Fujita N."/>
            <person name="Takeyama H."/>
            <person name="Matsunaga T."/>
        </authorList>
    </citation>
    <scope>NUCLEOTIDE SEQUENCE [LARGE SCALE GENOMIC DNA]</scope>
    <source>
        <strain>ATCC 700980 / DSM 13731 / RS-1</strain>
    </source>
</reference>
<comment type="function">
    <text evidence="1">Condenses 4-methyl-5-(beta-hydroxyethyl)thiazole monophosphate (THZ-P) and 2-methyl-4-amino-5-hydroxymethyl pyrimidine pyrophosphate (HMP-PP) to form thiamine monophosphate (TMP).</text>
</comment>
<comment type="catalytic activity">
    <reaction evidence="1">
        <text>2-[(2R,5Z)-2-carboxy-4-methylthiazol-5(2H)-ylidene]ethyl phosphate + 4-amino-2-methyl-5-(diphosphooxymethyl)pyrimidine + 2 H(+) = thiamine phosphate + CO2 + diphosphate</text>
        <dbReference type="Rhea" id="RHEA:47844"/>
        <dbReference type="ChEBI" id="CHEBI:15378"/>
        <dbReference type="ChEBI" id="CHEBI:16526"/>
        <dbReference type="ChEBI" id="CHEBI:33019"/>
        <dbReference type="ChEBI" id="CHEBI:37575"/>
        <dbReference type="ChEBI" id="CHEBI:57841"/>
        <dbReference type="ChEBI" id="CHEBI:62899"/>
        <dbReference type="EC" id="2.5.1.3"/>
    </reaction>
</comment>
<comment type="catalytic activity">
    <reaction evidence="1">
        <text>2-(2-carboxy-4-methylthiazol-5-yl)ethyl phosphate + 4-amino-2-methyl-5-(diphosphooxymethyl)pyrimidine + 2 H(+) = thiamine phosphate + CO2 + diphosphate</text>
        <dbReference type="Rhea" id="RHEA:47848"/>
        <dbReference type="ChEBI" id="CHEBI:15378"/>
        <dbReference type="ChEBI" id="CHEBI:16526"/>
        <dbReference type="ChEBI" id="CHEBI:33019"/>
        <dbReference type="ChEBI" id="CHEBI:37575"/>
        <dbReference type="ChEBI" id="CHEBI:57841"/>
        <dbReference type="ChEBI" id="CHEBI:62890"/>
        <dbReference type="EC" id="2.5.1.3"/>
    </reaction>
</comment>
<comment type="catalytic activity">
    <reaction evidence="1">
        <text>4-methyl-5-(2-phosphooxyethyl)-thiazole + 4-amino-2-methyl-5-(diphosphooxymethyl)pyrimidine + H(+) = thiamine phosphate + diphosphate</text>
        <dbReference type="Rhea" id="RHEA:22328"/>
        <dbReference type="ChEBI" id="CHEBI:15378"/>
        <dbReference type="ChEBI" id="CHEBI:33019"/>
        <dbReference type="ChEBI" id="CHEBI:37575"/>
        <dbReference type="ChEBI" id="CHEBI:57841"/>
        <dbReference type="ChEBI" id="CHEBI:58296"/>
        <dbReference type="EC" id="2.5.1.3"/>
    </reaction>
</comment>
<comment type="cofactor">
    <cofactor evidence="1">
        <name>Mg(2+)</name>
        <dbReference type="ChEBI" id="CHEBI:18420"/>
    </cofactor>
    <text evidence="1">Binds 1 Mg(2+) ion per subunit.</text>
</comment>
<comment type="pathway">
    <text evidence="1">Cofactor biosynthesis; thiamine diphosphate biosynthesis; thiamine phosphate from 4-amino-2-methyl-5-diphosphomethylpyrimidine and 4-methyl-5-(2-phosphoethyl)-thiazole: step 1/1.</text>
</comment>
<comment type="similarity">
    <text evidence="1">Belongs to the thiamine-phosphate synthase family.</text>
</comment>
<sequence length="211" mass="21639">MKPNFDPTLYLVTDRGCLAGRDLLDVVGRAVAGGAKLVQLREKNACTREFVELARALVGLVRPLGARLVINDRVDVALACDADGVHVGQDDMRPADVRALIGPDRLLGLSVTGEDEARAARGEPVDYLGAGPVFATATKKDAGAPQGIEGLIRMIALAEVPVVAIGAVTAANAAAVMAAGAAGLAMVSAICAAPDPEAAARELRVIAEQGR</sequence>
<protein>
    <recommendedName>
        <fullName evidence="1">Thiamine-phosphate synthase</fullName>
        <shortName evidence="1">TP synthase</shortName>
        <shortName evidence="1">TPS</shortName>
        <ecNumber evidence="1">2.5.1.3</ecNumber>
    </recommendedName>
    <alternativeName>
        <fullName evidence="1">Thiamine-phosphate pyrophosphorylase</fullName>
        <shortName evidence="1">TMP pyrophosphorylase</shortName>
        <shortName evidence="1">TMP-PPase</shortName>
    </alternativeName>
</protein>